<feature type="chain" id="PRO_1000073760" description="Ribosome-binding factor A">
    <location>
        <begin position="1"/>
        <end position="135"/>
    </location>
</feature>
<gene>
    <name evidence="1" type="primary">rbfA</name>
    <name type="ordered locus">Dshi_3041</name>
</gene>
<evidence type="ECO:0000255" key="1">
    <source>
        <dbReference type="HAMAP-Rule" id="MF_00003"/>
    </source>
</evidence>
<sequence length="135" mass="15420">MARSRFDTGSGPSQRQLRVGELIRRTLSSVLNQGDIHDPDLNRMSITVGEVRTSPDLKVATAYVLPLGGHGAQDALDALRRNRHELRRAVSKELTLKFSPELRFQIDETFDRMDETRRLLSQDHVRQDLDKPDED</sequence>
<keyword id="KW-0963">Cytoplasm</keyword>
<keyword id="KW-1185">Reference proteome</keyword>
<keyword id="KW-0690">Ribosome biogenesis</keyword>
<name>RBFA_DINSH</name>
<proteinExistence type="inferred from homology"/>
<organism>
    <name type="scientific">Dinoroseobacter shibae (strain DSM 16493 / NCIMB 14021 / DFL 12)</name>
    <dbReference type="NCBI Taxonomy" id="398580"/>
    <lineage>
        <taxon>Bacteria</taxon>
        <taxon>Pseudomonadati</taxon>
        <taxon>Pseudomonadota</taxon>
        <taxon>Alphaproteobacteria</taxon>
        <taxon>Rhodobacterales</taxon>
        <taxon>Roseobacteraceae</taxon>
        <taxon>Dinoroseobacter</taxon>
    </lineage>
</organism>
<dbReference type="EMBL" id="CP000830">
    <property type="protein sequence ID" value="ABV94774.1"/>
    <property type="molecule type" value="Genomic_DNA"/>
</dbReference>
<dbReference type="RefSeq" id="WP_012179702.1">
    <property type="nucleotide sequence ID" value="NC_009952.1"/>
</dbReference>
<dbReference type="SMR" id="A8LL25"/>
<dbReference type="STRING" id="398580.Dshi_3041"/>
<dbReference type="KEGG" id="dsh:Dshi_3041"/>
<dbReference type="eggNOG" id="COG0858">
    <property type="taxonomic scope" value="Bacteria"/>
</dbReference>
<dbReference type="HOGENOM" id="CLU_089475_1_0_5"/>
<dbReference type="OrthoDB" id="9805051at2"/>
<dbReference type="Proteomes" id="UP000006833">
    <property type="component" value="Chromosome"/>
</dbReference>
<dbReference type="GO" id="GO:0005829">
    <property type="term" value="C:cytosol"/>
    <property type="evidence" value="ECO:0007669"/>
    <property type="project" value="TreeGrafter"/>
</dbReference>
<dbReference type="GO" id="GO:0043024">
    <property type="term" value="F:ribosomal small subunit binding"/>
    <property type="evidence" value="ECO:0007669"/>
    <property type="project" value="TreeGrafter"/>
</dbReference>
<dbReference type="GO" id="GO:0030490">
    <property type="term" value="P:maturation of SSU-rRNA"/>
    <property type="evidence" value="ECO:0007669"/>
    <property type="project" value="UniProtKB-UniRule"/>
</dbReference>
<dbReference type="Gene3D" id="3.30.300.20">
    <property type="match status" value="1"/>
</dbReference>
<dbReference type="HAMAP" id="MF_00003">
    <property type="entry name" value="RbfA"/>
    <property type="match status" value="1"/>
</dbReference>
<dbReference type="InterPro" id="IPR015946">
    <property type="entry name" value="KH_dom-like_a/b"/>
</dbReference>
<dbReference type="InterPro" id="IPR000238">
    <property type="entry name" value="RbfA"/>
</dbReference>
<dbReference type="InterPro" id="IPR023799">
    <property type="entry name" value="RbfA_dom_sf"/>
</dbReference>
<dbReference type="InterPro" id="IPR020053">
    <property type="entry name" value="Ribosome-bd_factorA_CS"/>
</dbReference>
<dbReference type="NCBIfam" id="NF001802">
    <property type="entry name" value="PRK00521.2-5"/>
    <property type="match status" value="1"/>
</dbReference>
<dbReference type="PANTHER" id="PTHR33515">
    <property type="entry name" value="RIBOSOME-BINDING FACTOR A, CHLOROPLASTIC-RELATED"/>
    <property type="match status" value="1"/>
</dbReference>
<dbReference type="PANTHER" id="PTHR33515:SF1">
    <property type="entry name" value="RIBOSOME-BINDING FACTOR A, CHLOROPLASTIC-RELATED"/>
    <property type="match status" value="1"/>
</dbReference>
<dbReference type="Pfam" id="PF02033">
    <property type="entry name" value="RBFA"/>
    <property type="match status" value="1"/>
</dbReference>
<dbReference type="SUPFAM" id="SSF89919">
    <property type="entry name" value="Ribosome-binding factor A, RbfA"/>
    <property type="match status" value="1"/>
</dbReference>
<dbReference type="PROSITE" id="PS01319">
    <property type="entry name" value="RBFA"/>
    <property type="match status" value="1"/>
</dbReference>
<reference key="1">
    <citation type="journal article" date="2010" name="ISME J.">
        <title>The complete genome sequence of the algal symbiont Dinoroseobacter shibae: a hitchhiker's guide to life in the sea.</title>
        <authorList>
            <person name="Wagner-Dobler I."/>
            <person name="Ballhausen B."/>
            <person name="Berger M."/>
            <person name="Brinkhoff T."/>
            <person name="Buchholz I."/>
            <person name="Bunk B."/>
            <person name="Cypionka H."/>
            <person name="Daniel R."/>
            <person name="Drepper T."/>
            <person name="Gerdts G."/>
            <person name="Hahnke S."/>
            <person name="Han C."/>
            <person name="Jahn D."/>
            <person name="Kalhoefer D."/>
            <person name="Kiss H."/>
            <person name="Klenk H.P."/>
            <person name="Kyrpides N."/>
            <person name="Liebl W."/>
            <person name="Liesegang H."/>
            <person name="Meincke L."/>
            <person name="Pati A."/>
            <person name="Petersen J."/>
            <person name="Piekarski T."/>
            <person name="Pommerenke C."/>
            <person name="Pradella S."/>
            <person name="Pukall R."/>
            <person name="Rabus R."/>
            <person name="Stackebrandt E."/>
            <person name="Thole S."/>
            <person name="Thompson L."/>
            <person name="Tielen P."/>
            <person name="Tomasch J."/>
            <person name="von Jan M."/>
            <person name="Wanphrut N."/>
            <person name="Wichels A."/>
            <person name="Zech H."/>
            <person name="Simon M."/>
        </authorList>
    </citation>
    <scope>NUCLEOTIDE SEQUENCE [LARGE SCALE GENOMIC DNA]</scope>
    <source>
        <strain>DSM 16493 / NCIMB 14021 / DFL 12</strain>
    </source>
</reference>
<protein>
    <recommendedName>
        <fullName evidence="1">Ribosome-binding factor A</fullName>
    </recommendedName>
</protein>
<accession>A8LL25</accession>
<comment type="function">
    <text evidence="1">One of several proteins that assist in the late maturation steps of the functional core of the 30S ribosomal subunit. Associates with free 30S ribosomal subunits (but not with 30S subunits that are part of 70S ribosomes or polysomes). Required for efficient processing of 16S rRNA. May interact with the 5'-terminal helix region of 16S rRNA.</text>
</comment>
<comment type="subunit">
    <text evidence="1">Monomer. Binds 30S ribosomal subunits, but not 50S ribosomal subunits or 70S ribosomes.</text>
</comment>
<comment type="subcellular location">
    <subcellularLocation>
        <location evidence="1">Cytoplasm</location>
    </subcellularLocation>
</comment>
<comment type="similarity">
    <text evidence="1">Belongs to the RbfA family.</text>
</comment>